<accession>P93789</accession>
<feature type="chain" id="PRO_0000452278" description="Solanidine UDP-glucose glucosyltransferase 1">
    <location>
        <begin position="1"/>
        <end position="488"/>
    </location>
</feature>
<feature type="active site" description="Proton acceptor" evidence="1">
    <location>
        <position position="23"/>
    </location>
</feature>
<feature type="active site" description="Charge relay" evidence="1">
    <location>
        <position position="127"/>
    </location>
</feature>
<feature type="binding site" evidence="2">
    <location>
        <position position="23"/>
    </location>
    <ligand>
        <name>an anthocyanidin</name>
        <dbReference type="ChEBI" id="CHEBI:143576"/>
    </ligand>
</feature>
<feature type="binding site" evidence="1">
    <location>
        <position position="352"/>
    </location>
    <ligand>
        <name>UDP-alpha-D-glucose</name>
        <dbReference type="ChEBI" id="CHEBI:58885"/>
    </ligand>
</feature>
<feature type="binding site" evidence="1">
    <location>
        <position position="354"/>
    </location>
    <ligand>
        <name>UDP-alpha-D-glucose</name>
        <dbReference type="ChEBI" id="CHEBI:58885"/>
    </ligand>
</feature>
<feature type="binding site" evidence="1">
    <location>
        <position position="369"/>
    </location>
    <ligand>
        <name>UDP-alpha-D-glucose</name>
        <dbReference type="ChEBI" id="CHEBI:58885"/>
    </ligand>
</feature>
<feature type="binding site" evidence="1">
    <location>
        <position position="373"/>
    </location>
    <ligand>
        <name>UDP-alpha-D-glucose</name>
        <dbReference type="ChEBI" id="CHEBI:58885"/>
    </ligand>
</feature>
<feature type="binding site" evidence="1">
    <location>
        <position position="374"/>
    </location>
    <ligand>
        <name>UDP-alpha-D-glucose</name>
        <dbReference type="ChEBI" id="CHEBI:58885"/>
    </ligand>
</feature>
<feature type="binding site" evidence="1">
    <location>
        <position position="377"/>
    </location>
    <ligand>
        <name>UDP-alpha-D-glucose</name>
        <dbReference type="ChEBI" id="CHEBI:58885"/>
    </ligand>
</feature>
<feature type="binding site" evidence="2">
    <location>
        <position position="392"/>
    </location>
    <ligand>
        <name>an anthocyanidin</name>
        <dbReference type="ChEBI" id="CHEBI:143576"/>
    </ligand>
</feature>
<feature type="binding site" evidence="1">
    <location>
        <position position="393"/>
    </location>
    <ligand>
        <name>UDP-alpha-D-glucose</name>
        <dbReference type="ChEBI" id="CHEBI:58885"/>
    </ligand>
</feature>
<feature type="binding site" evidence="1">
    <location>
        <position position="394"/>
    </location>
    <ligand>
        <name>UDP-alpha-D-glucose</name>
        <dbReference type="ChEBI" id="CHEBI:58885"/>
    </ligand>
</feature>
<proteinExistence type="evidence at protein level"/>
<protein>
    <recommendedName>
        <fullName evidence="5">Solanidine UDP-glucose glucosyltransferase 1</fullName>
        <ecNumber evidence="3">2.4.1.-</ecNumber>
    </recommendedName>
</protein>
<sequence length="488" mass="55323">MVATCNNGEILHVLFLPFLSAGHFIPLVNAARLFASRGVKATILTTPHNALLFRSTIDDDVRISGFPISIVTIKFPSAEVGLPEGIESFNSATSPEMPHKIFYALSLLQKPMEDKIRELRPDCIFSDMYFPWTVDIADELHIPRILYNLSAYMCYSIMHNLKVYRPHKQPNLDESQSFVVPGLPDEIKFKLSQLTDDLRKSDDQKTVFDELLEQVEDSEERSYGIVHDTFYELEPAYVDYYQKLKKPKCWHFGPLSHFASKIRSKELISEHNNNEIVIDWLNAQKPKSVLYVSFGSMARFPESQLNEIAQALDASNVPFIFVLRPNEETASWLPVGNLEDKTKKGLYIKGWVPQLTIMEHSATGGFMTHCGTNSVLEAITFGVPMITWPLYADQFYNEKVVEVRGLGIKIGIDVWNEGIEITGPVIESAKIREAIERLMISNGSEEIINIRDRVMAMSKMAQNATNEGGSSWNNLTALIQHIKNYNLN</sequence>
<dbReference type="EC" id="2.4.1.-" evidence="3"/>
<dbReference type="EMBL" id="U82367">
    <property type="protein sequence ID" value="AAB48444.2"/>
    <property type="molecule type" value="mRNA"/>
</dbReference>
<dbReference type="PIR" id="T07786">
    <property type="entry name" value="T07786"/>
</dbReference>
<dbReference type="SMR" id="P93789"/>
<dbReference type="CAZy" id="GT1">
    <property type="family name" value="Glycosyltransferase Family 1"/>
</dbReference>
<dbReference type="InParanoid" id="P93789"/>
<dbReference type="BioCyc" id="MetaCyc:MONOMER-13434"/>
<dbReference type="Proteomes" id="UP000011115">
    <property type="component" value="Unplaced"/>
</dbReference>
<dbReference type="ExpressionAtlas" id="P93789">
    <property type="expression patterns" value="baseline"/>
</dbReference>
<dbReference type="GO" id="GO:0035251">
    <property type="term" value="F:UDP-glucosyltransferase activity"/>
    <property type="evidence" value="ECO:0000314"/>
    <property type="project" value="UniProtKB"/>
</dbReference>
<dbReference type="GO" id="GO:0008202">
    <property type="term" value="P:steroid metabolic process"/>
    <property type="evidence" value="ECO:0000314"/>
    <property type="project" value="UniProtKB"/>
</dbReference>
<dbReference type="CDD" id="cd03784">
    <property type="entry name" value="GT1_Gtf-like"/>
    <property type="match status" value="1"/>
</dbReference>
<dbReference type="FunFam" id="3.40.50.2000:FF:000056">
    <property type="entry name" value="Glycosyltransferase"/>
    <property type="match status" value="1"/>
</dbReference>
<dbReference type="Gene3D" id="3.40.50.2000">
    <property type="entry name" value="Glycogen Phosphorylase B"/>
    <property type="match status" value="2"/>
</dbReference>
<dbReference type="InterPro" id="IPR002213">
    <property type="entry name" value="UDP_glucos_trans"/>
</dbReference>
<dbReference type="InterPro" id="IPR035595">
    <property type="entry name" value="UDP_glycos_trans_CS"/>
</dbReference>
<dbReference type="PANTHER" id="PTHR48047">
    <property type="entry name" value="GLYCOSYLTRANSFERASE"/>
    <property type="match status" value="1"/>
</dbReference>
<dbReference type="PANTHER" id="PTHR48047:SF150">
    <property type="entry name" value="SOLANIDINE UDP-GLUCOSE GLUCOSYLTRANSFERASE 1"/>
    <property type="match status" value="1"/>
</dbReference>
<dbReference type="Pfam" id="PF00201">
    <property type="entry name" value="UDPGT"/>
    <property type="match status" value="1"/>
</dbReference>
<dbReference type="SUPFAM" id="SSF53756">
    <property type="entry name" value="UDP-Glycosyltransferase/glycogen phosphorylase"/>
    <property type="match status" value="1"/>
</dbReference>
<dbReference type="PROSITE" id="PS00375">
    <property type="entry name" value="UDPGT"/>
    <property type="match status" value="1"/>
</dbReference>
<comment type="function">
    <text evidence="3 4">Glucosyltransferase involved in the glucosylation of the steroidal alkaloid aglycons solanidine, solasodine and tomatidine to produce their corresponding glycoalkaloids.</text>
</comment>
<comment type="catalytic activity">
    <reaction evidence="3">
        <text>solasodine + UDP-alpha-D-glucose = solasodine 3-beta-D-glucoside + UDP + H(+)</text>
        <dbReference type="Rhea" id="RHEA:61844"/>
        <dbReference type="ChEBI" id="CHEBI:15378"/>
        <dbReference type="ChEBI" id="CHEBI:58223"/>
        <dbReference type="ChEBI" id="CHEBI:58885"/>
        <dbReference type="ChEBI" id="CHEBI:145042"/>
        <dbReference type="ChEBI" id="CHEBI:145043"/>
    </reaction>
    <physiologicalReaction direction="left-to-right" evidence="3">
        <dbReference type="Rhea" id="RHEA:61845"/>
    </physiologicalReaction>
</comment>
<comment type="catalytic activity">
    <reaction evidence="3">
        <text>solanidine + UDP-alpha-D-glucose = solanidine 3-O-beta-D-glucopyranoside + UDP + H(+)</text>
        <dbReference type="Rhea" id="RHEA:66280"/>
        <dbReference type="ChEBI" id="CHEBI:15378"/>
        <dbReference type="ChEBI" id="CHEBI:58223"/>
        <dbReference type="ChEBI" id="CHEBI:58885"/>
        <dbReference type="ChEBI" id="CHEBI:166996"/>
        <dbReference type="ChEBI" id="CHEBI:166997"/>
    </reaction>
    <physiologicalReaction direction="left-to-right" evidence="3">
        <dbReference type="Rhea" id="RHEA:66281"/>
    </physiologicalReaction>
</comment>
<comment type="catalytic activity">
    <reaction evidence="3">
        <text>tomatidine + UDP-alpha-D-glucose = tomatidine 3-O-beta-D-glucopyranoside + UDP + H(+)</text>
        <dbReference type="Rhea" id="RHEA:66284"/>
        <dbReference type="ChEBI" id="CHEBI:15378"/>
        <dbReference type="ChEBI" id="CHEBI:58223"/>
        <dbReference type="ChEBI" id="CHEBI:58885"/>
        <dbReference type="ChEBI" id="CHEBI:166998"/>
        <dbReference type="ChEBI" id="CHEBI:166999"/>
    </reaction>
    <physiologicalReaction direction="left-to-right" evidence="3">
        <dbReference type="Rhea" id="RHEA:66285"/>
    </physiologicalReaction>
</comment>
<comment type="tissue specificity">
    <text evidence="3">Expressed in the shoot apical meristem (SAM) and tuber.</text>
</comment>
<comment type="induction">
    <text evidence="3">Induced by wounding.</text>
</comment>
<comment type="similarity">
    <text evidence="6">Belongs to the UDP-glycosyltransferase family.</text>
</comment>
<evidence type="ECO:0000250" key="1">
    <source>
        <dbReference type="UniProtKB" id="A0A0A1HA03"/>
    </source>
</evidence>
<evidence type="ECO:0000250" key="2">
    <source>
        <dbReference type="UniProtKB" id="P51094"/>
    </source>
</evidence>
<evidence type="ECO:0000269" key="3">
    <source>
    </source>
</evidence>
<evidence type="ECO:0000269" key="4">
    <source ref="2"/>
</evidence>
<evidence type="ECO:0000303" key="5">
    <source>
    </source>
</evidence>
<evidence type="ECO:0000305" key="6"/>
<gene>
    <name evidence="5" type="primary">SGT1</name>
</gene>
<reference key="1">
    <citation type="journal article" date="1997" name="Plant J.">
        <title>Cloning and expression of solanidine UDP-glucose glucosyltransferase from potato.</title>
        <authorList>
            <person name="Moehs C.P."/>
            <person name="Allen P.V."/>
            <person name="Friedman M."/>
            <person name="Belknap W.R."/>
        </authorList>
    </citation>
    <scope>NUCLEOTIDE SEQUENCE [MRNA]</scope>
    <scope>FUNCTION</scope>
    <scope>CATALYTIC ACTIVITY</scope>
    <scope>TISSUE SPECIFICITY</scope>
    <scope>INDUCTION BY WOUNDING</scope>
</reference>
<reference key="2">
    <citation type="journal article" date="2005" name="Plant Sci.">
        <title>Metabolic compensation of steroidal glycoalkaloid biosynthesis in transgenic potato tubers: using reverse genetics to confirm the in vivo enzyme function of a steroidal alkaloid galactosyltransferase.</title>
        <authorList>
            <person name="McCue K.F."/>
            <person name="Shepherd L.V.T."/>
            <person name="Allen P.V."/>
            <person name="Maccree M.M."/>
            <person name="Rockhold D.R."/>
            <person name="Corsini D.L."/>
            <person name="Davies H.V."/>
            <person name="Belknap W.R."/>
        </authorList>
        <dbReference type="AGRICOLA" id="IND43662550"/>
    </citation>
    <scope>FUNCTION</scope>
</reference>
<keyword id="KW-0328">Glycosyltransferase</keyword>
<keyword id="KW-1185">Reference proteome</keyword>
<keyword id="KW-0808">Transferase</keyword>
<organism>
    <name type="scientific">Solanum tuberosum</name>
    <name type="common">Potato</name>
    <dbReference type="NCBI Taxonomy" id="4113"/>
    <lineage>
        <taxon>Eukaryota</taxon>
        <taxon>Viridiplantae</taxon>
        <taxon>Streptophyta</taxon>
        <taxon>Embryophyta</taxon>
        <taxon>Tracheophyta</taxon>
        <taxon>Spermatophyta</taxon>
        <taxon>Magnoliopsida</taxon>
        <taxon>eudicotyledons</taxon>
        <taxon>Gunneridae</taxon>
        <taxon>Pentapetalae</taxon>
        <taxon>asterids</taxon>
        <taxon>lamiids</taxon>
        <taxon>Solanales</taxon>
        <taxon>Solanaceae</taxon>
        <taxon>Solanoideae</taxon>
        <taxon>Solaneae</taxon>
        <taxon>Solanum</taxon>
    </lineage>
</organism>
<name>SGT1_SOLTU</name>